<protein>
    <recommendedName>
        <fullName>Neurensin-1</fullName>
    </recommendedName>
    <alternativeName>
        <fullName>Neuro-p24</fullName>
    </alternativeName>
    <alternativeName>
        <fullName>Vesicular membrane protein of 24 kDa</fullName>
        <shortName>Vesicular membrane protein p24</shortName>
    </alternativeName>
</protein>
<evidence type="ECO:0000250" key="1">
    <source>
        <dbReference type="UniProtKB" id="P97799"/>
    </source>
</evidence>
<evidence type="ECO:0000255" key="2"/>
<evidence type="ECO:0000269" key="3">
    <source>
    </source>
</evidence>
<evidence type="ECO:0000269" key="4">
    <source>
    </source>
</evidence>
<evidence type="ECO:0000305" key="5"/>
<evidence type="ECO:0000312" key="6">
    <source>
        <dbReference type="EMBL" id="AAH23514.1"/>
    </source>
</evidence>
<evidence type="ECO:0000312" key="7">
    <source>
        <dbReference type="EMBL" id="AAL14639.1"/>
    </source>
</evidence>
<evidence type="ECO:0000312" key="8">
    <source>
        <dbReference type="EMBL" id="BAC04748.1"/>
    </source>
</evidence>
<evidence type="ECO:0000312" key="9">
    <source>
        <dbReference type="HGNC" id="HGNC:17881"/>
    </source>
</evidence>
<reference evidence="5 7" key="1">
    <citation type="journal article" date="2002" name="Mol. Biol. Rep.">
        <title>Cloning, expression and characterization of a novel human VMP gene.</title>
        <authorList>
            <person name="Cheng C."/>
            <person name="Xu J."/>
            <person name="Ye X."/>
            <person name="Dai J."/>
            <person name="Wu Q."/>
            <person name="Zeng L."/>
            <person name="Wang L."/>
            <person name="Zhao W."/>
            <person name="Ji C."/>
            <person name="Gu S."/>
            <person name="Xie Y."/>
            <person name="Mao Y."/>
        </authorList>
    </citation>
    <scope>NUCLEOTIDE SEQUENCE [MRNA]</scope>
    <scope>FUNCTION</scope>
    <scope>TISSUE SPECIFICITY</scope>
    <source>
        <tissue evidence="3">Fetal brain</tissue>
    </source>
</reference>
<reference evidence="8" key="2">
    <citation type="journal article" date="2004" name="Nat. Genet.">
        <title>Complete sequencing and characterization of 21,243 full-length human cDNAs.</title>
        <authorList>
            <person name="Ota T."/>
            <person name="Suzuki Y."/>
            <person name="Nishikawa T."/>
            <person name="Otsuki T."/>
            <person name="Sugiyama T."/>
            <person name="Irie R."/>
            <person name="Wakamatsu A."/>
            <person name="Hayashi K."/>
            <person name="Sato H."/>
            <person name="Nagai K."/>
            <person name="Kimura K."/>
            <person name="Makita H."/>
            <person name="Sekine M."/>
            <person name="Obayashi M."/>
            <person name="Nishi T."/>
            <person name="Shibahara T."/>
            <person name="Tanaka T."/>
            <person name="Ishii S."/>
            <person name="Yamamoto J."/>
            <person name="Saito K."/>
            <person name="Kawai Y."/>
            <person name="Isono Y."/>
            <person name="Nakamura Y."/>
            <person name="Nagahari K."/>
            <person name="Murakami K."/>
            <person name="Yasuda T."/>
            <person name="Iwayanagi T."/>
            <person name="Wagatsuma M."/>
            <person name="Shiratori A."/>
            <person name="Sudo H."/>
            <person name="Hosoiri T."/>
            <person name="Kaku Y."/>
            <person name="Kodaira H."/>
            <person name="Kondo H."/>
            <person name="Sugawara M."/>
            <person name="Takahashi M."/>
            <person name="Kanda K."/>
            <person name="Yokoi T."/>
            <person name="Furuya T."/>
            <person name="Kikkawa E."/>
            <person name="Omura Y."/>
            <person name="Abe K."/>
            <person name="Kamihara K."/>
            <person name="Katsuta N."/>
            <person name="Sato K."/>
            <person name="Tanikawa M."/>
            <person name="Yamazaki M."/>
            <person name="Ninomiya K."/>
            <person name="Ishibashi T."/>
            <person name="Yamashita H."/>
            <person name="Murakawa K."/>
            <person name="Fujimori K."/>
            <person name="Tanai H."/>
            <person name="Kimata M."/>
            <person name="Watanabe M."/>
            <person name="Hiraoka S."/>
            <person name="Chiba Y."/>
            <person name="Ishida S."/>
            <person name="Ono Y."/>
            <person name="Takiguchi S."/>
            <person name="Watanabe S."/>
            <person name="Yosida M."/>
            <person name="Hotuta T."/>
            <person name="Kusano J."/>
            <person name="Kanehori K."/>
            <person name="Takahashi-Fujii A."/>
            <person name="Hara H."/>
            <person name="Tanase T.-O."/>
            <person name="Nomura Y."/>
            <person name="Togiya S."/>
            <person name="Komai F."/>
            <person name="Hara R."/>
            <person name="Takeuchi K."/>
            <person name="Arita M."/>
            <person name="Imose N."/>
            <person name="Musashino K."/>
            <person name="Yuuki H."/>
            <person name="Oshima A."/>
            <person name="Sasaki N."/>
            <person name="Aotsuka S."/>
            <person name="Yoshikawa Y."/>
            <person name="Matsunawa H."/>
            <person name="Ichihara T."/>
            <person name="Shiohata N."/>
            <person name="Sano S."/>
            <person name="Moriya S."/>
            <person name="Momiyama H."/>
            <person name="Satoh N."/>
            <person name="Takami S."/>
            <person name="Terashima Y."/>
            <person name="Suzuki O."/>
            <person name="Nakagawa S."/>
            <person name="Senoh A."/>
            <person name="Mizoguchi H."/>
            <person name="Goto Y."/>
            <person name="Shimizu F."/>
            <person name="Wakebe H."/>
            <person name="Hishigaki H."/>
            <person name="Watanabe T."/>
            <person name="Sugiyama A."/>
            <person name="Takemoto M."/>
            <person name="Kawakami B."/>
            <person name="Yamazaki M."/>
            <person name="Watanabe K."/>
            <person name="Kumagai A."/>
            <person name="Itakura S."/>
            <person name="Fukuzumi Y."/>
            <person name="Fujimori Y."/>
            <person name="Komiyama M."/>
            <person name="Tashiro H."/>
            <person name="Tanigami A."/>
            <person name="Fujiwara T."/>
            <person name="Ono T."/>
            <person name="Yamada K."/>
            <person name="Fujii Y."/>
            <person name="Ozaki K."/>
            <person name="Hirao M."/>
            <person name="Ohmori Y."/>
            <person name="Kawabata A."/>
            <person name="Hikiji T."/>
            <person name="Kobatake N."/>
            <person name="Inagaki H."/>
            <person name="Ikema Y."/>
            <person name="Okamoto S."/>
            <person name="Okitani R."/>
            <person name="Kawakami T."/>
            <person name="Noguchi S."/>
            <person name="Itoh T."/>
            <person name="Shigeta K."/>
            <person name="Senba T."/>
            <person name="Matsumura K."/>
            <person name="Nakajima Y."/>
            <person name="Mizuno T."/>
            <person name="Morinaga M."/>
            <person name="Sasaki M."/>
            <person name="Togashi T."/>
            <person name="Oyama M."/>
            <person name="Hata H."/>
            <person name="Watanabe M."/>
            <person name="Komatsu T."/>
            <person name="Mizushima-Sugano J."/>
            <person name="Satoh T."/>
            <person name="Shirai Y."/>
            <person name="Takahashi Y."/>
            <person name="Nakagawa K."/>
            <person name="Okumura K."/>
            <person name="Nagase T."/>
            <person name="Nomura N."/>
            <person name="Kikuchi H."/>
            <person name="Masuho Y."/>
            <person name="Yamashita R."/>
            <person name="Nakai K."/>
            <person name="Yada T."/>
            <person name="Nakamura Y."/>
            <person name="Ohara O."/>
            <person name="Isogai T."/>
            <person name="Sugano S."/>
        </authorList>
    </citation>
    <scope>NUCLEOTIDE SEQUENCE [LARGE SCALE MRNA]</scope>
    <source>
        <tissue>Brain</tissue>
        <tissue evidence="4">Teratocarcinoma</tissue>
    </source>
</reference>
<reference key="3">
    <citation type="journal article" date="2003" name="Nature">
        <title>The DNA sequence and analysis of human chromosome 6.</title>
        <authorList>
            <person name="Mungall A.J."/>
            <person name="Palmer S.A."/>
            <person name="Sims S.K."/>
            <person name="Edwards C.A."/>
            <person name="Ashurst J.L."/>
            <person name="Wilming L."/>
            <person name="Jones M.C."/>
            <person name="Horton R."/>
            <person name="Hunt S.E."/>
            <person name="Scott C.E."/>
            <person name="Gilbert J.G.R."/>
            <person name="Clamp M.E."/>
            <person name="Bethel G."/>
            <person name="Milne S."/>
            <person name="Ainscough R."/>
            <person name="Almeida J.P."/>
            <person name="Ambrose K.D."/>
            <person name="Andrews T.D."/>
            <person name="Ashwell R.I.S."/>
            <person name="Babbage A.K."/>
            <person name="Bagguley C.L."/>
            <person name="Bailey J."/>
            <person name="Banerjee R."/>
            <person name="Barker D.J."/>
            <person name="Barlow K.F."/>
            <person name="Bates K."/>
            <person name="Beare D.M."/>
            <person name="Beasley H."/>
            <person name="Beasley O."/>
            <person name="Bird C.P."/>
            <person name="Blakey S.E."/>
            <person name="Bray-Allen S."/>
            <person name="Brook J."/>
            <person name="Brown A.J."/>
            <person name="Brown J.Y."/>
            <person name="Burford D.C."/>
            <person name="Burrill W."/>
            <person name="Burton J."/>
            <person name="Carder C."/>
            <person name="Carter N.P."/>
            <person name="Chapman J.C."/>
            <person name="Clark S.Y."/>
            <person name="Clark G."/>
            <person name="Clee C.M."/>
            <person name="Clegg S."/>
            <person name="Cobley V."/>
            <person name="Collier R.E."/>
            <person name="Collins J.E."/>
            <person name="Colman L.K."/>
            <person name="Corby N.R."/>
            <person name="Coville G.J."/>
            <person name="Culley K.M."/>
            <person name="Dhami P."/>
            <person name="Davies J."/>
            <person name="Dunn M."/>
            <person name="Earthrowl M.E."/>
            <person name="Ellington A.E."/>
            <person name="Evans K.A."/>
            <person name="Faulkner L."/>
            <person name="Francis M.D."/>
            <person name="Frankish A."/>
            <person name="Frankland J."/>
            <person name="French L."/>
            <person name="Garner P."/>
            <person name="Garnett J."/>
            <person name="Ghori M.J."/>
            <person name="Gilby L.M."/>
            <person name="Gillson C.J."/>
            <person name="Glithero R.J."/>
            <person name="Grafham D.V."/>
            <person name="Grant M."/>
            <person name="Gribble S."/>
            <person name="Griffiths C."/>
            <person name="Griffiths M.N.D."/>
            <person name="Hall R."/>
            <person name="Halls K.S."/>
            <person name="Hammond S."/>
            <person name="Harley J.L."/>
            <person name="Hart E.A."/>
            <person name="Heath P.D."/>
            <person name="Heathcott R."/>
            <person name="Holmes S.J."/>
            <person name="Howden P.J."/>
            <person name="Howe K.L."/>
            <person name="Howell G.R."/>
            <person name="Huckle E."/>
            <person name="Humphray S.J."/>
            <person name="Humphries M.D."/>
            <person name="Hunt A.R."/>
            <person name="Johnson C.M."/>
            <person name="Joy A.A."/>
            <person name="Kay M."/>
            <person name="Keenan S.J."/>
            <person name="Kimberley A.M."/>
            <person name="King A."/>
            <person name="Laird G.K."/>
            <person name="Langford C."/>
            <person name="Lawlor S."/>
            <person name="Leongamornlert D.A."/>
            <person name="Leversha M."/>
            <person name="Lloyd C.R."/>
            <person name="Lloyd D.M."/>
            <person name="Loveland J.E."/>
            <person name="Lovell J."/>
            <person name="Martin S."/>
            <person name="Mashreghi-Mohammadi M."/>
            <person name="Maslen G.L."/>
            <person name="Matthews L."/>
            <person name="McCann O.T."/>
            <person name="McLaren S.J."/>
            <person name="McLay K."/>
            <person name="McMurray A."/>
            <person name="Moore M.J.F."/>
            <person name="Mullikin J.C."/>
            <person name="Niblett D."/>
            <person name="Nickerson T."/>
            <person name="Novik K.L."/>
            <person name="Oliver K."/>
            <person name="Overton-Larty E.K."/>
            <person name="Parker A."/>
            <person name="Patel R."/>
            <person name="Pearce A.V."/>
            <person name="Peck A.I."/>
            <person name="Phillimore B.J.C.T."/>
            <person name="Phillips S."/>
            <person name="Plumb R.W."/>
            <person name="Porter K.M."/>
            <person name="Ramsey Y."/>
            <person name="Ranby S.A."/>
            <person name="Rice C.M."/>
            <person name="Ross M.T."/>
            <person name="Searle S.M."/>
            <person name="Sehra H.K."/>
            <person name="Sheridan E."/>
            <person name="Skuce C.D."/>
            <person name="Smith S."/>
            <person name="Smith M."/>
            <person name="Spraggon L."/>
            <person name="Squares S.L."/>
            <person name="Steward C.A."/>
            <person name="Sycamore N."/>
            <person name="Tamlyn-Hall G."/>
            <person name="Tester J."/>
            <person name="Theaker A.J."/>
            <person name="Thomas D.W."/>
            <person name="Thorpe A."/>
            <person name="Tracey A."/>
            <person name="Tromans A."/>
            <person name="Tubby B."/>
            <person name="Wall M."/>
            <person name="Wallis J.M."/>
            <person name="West A.P."/>
            <person name="White S.S."/>
            <person name="Whitehead S.L."/>
            <person name="Whittaker H."/>
            <person name="Wild A."/>
            <person name="Willey D.J."/>
            <person name="Wilmer T.E."/>
            <person name="Wood J.M."/>
            <person name="Wray P.W."/>
            <person name="Wyatt J.C."/>
            <person name="Young L."/>
            <person name="Younger R.M."/>
            <person name="Bentley D.R."/>
            <person name="Coulson A."/>
            <person name="Durbin R.M."/>
            <person name="Hubbard T."/>
            <person name="Sulston J.E."/>
            <person name="Dunham I."/>
            <person name="Rogers J."/>
            <person name="Beck S."/>
        </authorList>
    </citation>
    <scope>NUCLEOTIDE SEQUENCE [LARGE SCALE GENOMIC DNA]</scope>
</reference>
<reference key="4">
    <citation type="submission" date="2005-07" db="EMBL/GenBank/DDBJ databases">
        <authorList>
            <person name="Mural R.J."/>
            <person name="Istrail S."/>
            <person name="Sutton G.G."/>
            <person name="Florea L."/>
            <person name="Halpern A.L."/>
            <person name="Mobarry C.M."/>
            <person name="Lippert R."/>
            <person name="Walenz B."/>
            <person name="Shatkay H."/>
            <person name="Dew I."/>
            <person name="Miller J.R."/>
            <person name="Flanigan M.J."/>
            <person name="Edwards N.J."/>
            <person name="Bolanos R."/>
            <person name="Fasulo D."/>
            <person name="Halldorsson B.V."/>
            <person name="Hannenhalli S."/>
            <person name="Turner R."/>
            <person name="Yooseph S."/>
            <person name="Lu F."/>
            <person name="Nusskern D.R."/>
            <person name="Shue B.C."/>
            <person name="Zheng X.H."/>
            <person name="Zhong F."/>
            <person name="Delcher A.L."/>
            <person name="Huson D.H."/>
            <person name="Kravitz S.A."/>
            <person name="Mouchard L."/>
            <person name="Reinert K."/>
            <person name="Remington K.A."/>
            <person name="Clark A.G."/>
            <person name="Waterman M.S."/>
            <person name="Eichler E.E."/>
            <person name="Adams M.D."/>
            <person name="Hunkapiller M.W."/>
            <person name="Myers E.W."/>
            <person name="Venter J.C."/>
        </authorList>
    </citation>
    <scope>NUCLEOTIDE SEQUENCE [LARGE SCALE GENOMIC DNA]</scope>
</reference>
<reference evidence="6" key="5">
    <citation type="journal article" date="2004" name="Genome Res.">
        <title>The status, quality, and expansion of the NIH full-length cDNA project: the Mammalian Gene Collection (MGC).</title>
        <authorList>
            <consortium name="The MGC Project Team"/>
        </authorList>
    </citation>
    <scope>NUCLEOTIDE SEQUENCE [LARGE SCALE MRNA]</scope>
    <source>
        <tissue evidence="6">Brain</tissue>
    </source>
</reference>
<comment type="function">
    <text evidence="1 3">May play an important role in neural organelle transport, and in transduction of nerve signals or in nerve growth. May play a role in neurite extension. May play a role in memory consolidation (By similarity).</text>
</comment>
<comment type="interaction">
    <interactant intactId="EBI-10264528">
        <id>Q8IZ57</id>
    </interactant>
    <interactant intactId="EBI-743099">
        <id>Q969F0</id>
        <label>FATE1</label>
    </interactant>
    <organismsDiffer>false</organismsDiffer>
    <experiments>3</experiments>
</comment>
<comment type="interaction">
    <interactant intactId="EBI-10264528">
        <id>Q8IZ57</id>
    </interactant>
    <interactant intactId="EBI-2869867">
        <id>P12314</id>
        <label>FCGR1A</label>
    </interactant>
    <organismsDiffer>false</organismsDiffer>
    <experiments>3</experiments>
</comment>
<comment type="interaction">
    <interactant intactId="EBI-10264528">
        <id>Q8IZ57</id>
    </interactant>
    <interactant intactId="EBI-4289554">
        <id>Q99795</id>
        <label>GPA33</label>
    </interactant>
    <organismsDiffer>false</organismsDiffer>
    <experiments>3</experiments>
</comment>
<comment type="interaction">
    <interactant intactId="EBI-10264528">
        <id>Q8IZ57</id>
    </interactant>
    <interactant intactId="EBI-10329546">
        <id>Q9Y5Y7</id>
        <label>LYVE1</label>
    </interactant>
    <organismsDiffer>false</organismsDiffer>
    <experiments>3</experiments>
</comment>
<comment type="interaction">
    <interactant intactId="EBI-10264528">
        <id>Q8IZ57</id>
    </interactant>
    <interactant intactId="EBI-13044680">
        <id>Q9Y225-2</id>
        <label>RNF24</label>
    </interactant>
    <organismsDiffer>false</organismsDiffer>
    <experiments>3</experiments>
</comment>
<comment type="interaction">
    <interactant intactId="EBI-10264528">
        <id>Q8IZ57</id>
    </interactant>
    <interactant intactId="EBI-17498703">
        <id>Q9HBV2</id>
        <label>SPACA1</label>
    </interactant>
    <organismsDiffer>false</organismsDiffer>
    <experiments>3</experiments>
</comment>
<comment type="interaction">
    <interactant intactId="EBI-10264528">
        <id>Q8IZ57</id>
    </interactant>
    <interactant intactId="EBI-2821497">
        <id>Q9BVX2</id>
        <label>TMEM106C</label>
    </interactant>
    <organismsDiffer>false</organismsDiffer>
    <experiments>3</experiments>
</comment>
<comment type="subcellular location">
    <subcellularLocation>
        <location evidence="5">Membrane</location>
        <topology evidence="5">Multi-pass membrane protein</topology>
    </subcellularLocation>
    <subcellularLocation>
        <location evidence="1">Cell projection</location>
        <location evidence="1">Neuron projection</location>
    </subcellularLocation>
</comment>
<comment type="tissue specificity">
    <text evidence="3">Expressed in brain. Not detectable in other tissues tested.</text>
</comment>
<comment type="similarity">
    <text evidence="2">Belongs to the VMP family.</text>
</comment>
<dbReference type="EMBL" id="AF418980">
    <property type="protein sequence ID" value="AAL14639.1"/>
    <property type="molecule type" value="mRNA"/>
</dbReference>
<dbReference type="EMBL" id="AK096290">
    <property type="protein sequence ID" value="BAC04748.1"/>
    <property type="molecule type" value="mRNA"/>
</dbReference>
<dbReference type="EMBL" id="AK314373">
    <property type="protein sequence ID" value="BAG37001.1"/>
    <property type="molecule type" value="mRNA"/>
</dbReference>
<dbReference type="EMBL" id="FO393410">
    <property type="status" value="NOT_ANNOTATED_CDS"/>
    <property type="molecule type" value="Genomic_DNA"/>
</dbReference>
<dbReference type="EMBL" id="CH471087">
    <property type="protein sequence ID" value="EAW55439.1"/>
    <property type="molecule type" value="Genomic_DNA"/>
</dbReference>
<dbReference type="EMBL" id="BC023514">
    <property type="protein sequence ID" value="AAH23514.1"/>
    <property type="molecule type" value="mRNA"/>
</dbReference>
<dbReference type="CCDS" id="CCDS4549.1"/>
<dbReference type="RefSeq" id="NP_542454.3">
    <property type="nucleotide sequence ID" value="NM_080723.4"/>
</dbReference>
<dbReference type="BioGRID" id="126698">
    <property type="interactions" value="181"/>
</dbReference>
<dbReference type="FunCoup" id="Q8IZ57">
    <property type="interactions" value="135"/>
</dbReference>
<dbReference type="IntAct" id="Q8IZ57">
    <property type="interactions" value="177"/>
</dbReference>
<dbReference type="STRING" id="9606.ENSP00000367739"/>
<dbReference type="TCDB" id="8.A.122.1.1">
    <property type="family name" value="the vesicular membrane neurensin/tmem74 (neurensin/tmem74) family"/>
</dbReference>
<dbReference type="GlyGen" id="Q8IZ57">
    <property type="glycosylation" value="1 site"/>
</dbReference>
<dbReference type="PhosphoSitePlus" id="Q8IZ57"/>
<dbReference type="BioMuta" id="NRSN1"/>
<dbReference type="DMDM" id="74750784"/>
<dbReference type="jPOST" id="Q8IZ57"/>
<dbReference type="MassIVE" id="Q8IZ57"/>
<dbReference type="PaxDb" id="9606-ENSP00000367739"/>
<dbReference type="PeptideAtlas" id="Q8IZ57"/>
<dbReference type="ProteomicsDB" id="71280"/>
<dbReference type="Antibodypedia" id="58910">
    <property type="antibodies" value="96 antibodies from 20 providers"/>
</dbReference>
<dbReference type="DNASU" id="140767"/>
<dbReference type="Ensembl" id="ENST00000378478.5">
    <property type="protein sequence ID" value="ENSP00000367739.2"/>
    <property type="gene ID" value="ENSG00000152954.12"/>
</dbReference>
<dbReference type="Ensembl" id="ENST00000378491.9">
    <property type="protein sequence ID" value="ENSP00000367752.4"/>
    <property type="gene ID" value="ENSG00000152954.12"/>
</dbReference>
<dbReference type="GeneID" id="140767"/>
<dbReference type="KEGG" id="hsa:140767"/>
<dbReference type="MANE-Select" id="ENST00000378491.9">
    <property type="protein sequence ID" value="ENSP00000367752.4"/>
    <property type="RefSeq nucleotide sequence ID" value="NM_080723.5"/>
    <property type="RefSeq protein sequence ID" value="NP_542454.3"/>
</dbReference>
<dbReference type="UCSC" id="uc010jpq.1">
    <property type="organism name" value="human"/>
</dbReference>
<dbReference type="AGR" id="HGNC:17881"/>
<dbReference type="CTD" id="140767"/>
<dbReference type="DisGeNET" id="140767"/>
<dbReference type="GeneCards" id="NRSN1"/>
<dbReference type="HGNC" id="HGNC:17881">
    <property type="gene designation" value="NRSN1"/>
</dbReference>
<dbReference type="HPA" id="ENSG00000152954">
    <property type="expression patterns" value="Group enriched (brain, pituitary gland, retina)"/>
</dbReference>
<dbReference type="MIM" id="616630">
    <property type="type" value="gene"/>
</dbReference>
<dbReference type="neXtProt" id="NX_Q8IZ57"/>
<dbReference type="OpenTargets" id="ENSG00000152954"/>
<dbReference type="PharmGKB" id="PA38254"/>
<dbReference type="VEuPathDB" id="HostDB:ENSG00000152954"/>
<dbReference type="eggNOG" id="ENOG502QRNK">
    <property type="taxonomic scope" value="Eukaryota"/>
</dbReference>
<dbReference type="GeneTree" id="ENSGT00530000063877"/>
<dbReference type="InParanoid" id="Q8IZ57"/>
<dbReference type="OMA" id="ASIWEHE"/>
<dbReference type="OrthoDB" id="5979667at2759"/>
<dbReference type="PAN-GO" id="Q8IZ57">
    <property type="GO annotations" value="4 GO annotations based on evolutionary models"/>
</dbReference>
<dbReference type="PhylomeDB" id="Q8IZ57"/>
<dbReference type="TreeFam" id="TF332090"/>
<dbReference type="PathwayCommons" id="Q8IZ57"/>
<dbReference type="SignaLink" id="Q8IZ57"/>
<dbReference type="BioGRID-ORCS" id="140767">
    <property type="hits" value="11 hits in 1143 CRISPR screens"/>
</dbReference>
<dbReference type="GeneWiki" id="NRSN1"/>
<dbReference type="GenomeRNAi" id="140767"/>
<dbReference type="Pharos" id="Q8IZ57">
    <property type="development level" value="Tbio"/>
</dbReference>
<dbReference type="PRO" id="PR:Q8IZ57"/>
<dbReference type="Proteomes" id="UP000005640">
    <property type="component" value="Chromosome 6"/>
</dbReference>
<dbReference type="RNAct" id="Q8IZ57">
    <property type="molecule type" value="protein"/>
</dbReference>
<dbReference type="Bgee" id="ENSG00000152954">
    <property type="expression patterns" value="Expressed in dorsolateral prefrontal cortex and 124 other cell types or tissues"/>
</dbReference>
<dbReference type="ExpressionAtlas" id="Q8IZ57">
    <property type="expression patterns" value="baseline and differential"/>
</dbReference>
<dbReference type="GO" id="GO:0031410">
    <property type="term" value="C:cytoplasmic vesicle"/>
    <property type="evidence" value="ECO:0000250"/>
    <property type="project" value="UniProtKB"/>
</dbReference>
<dbReference type="GO" id="GO:0030426">
    <property type="term" value="C:growth cone"/>
    <property type="evidence" value="ECO:0000250"/>
    <property type="project" value="UniProtKB"/>
</dbReference>
<dbReference type="GO" id="GO:0016020">
    <property type="term" value="C:membrane"/>
    <property type="evidence" value="ECO:0007669"/>
    <property type="project" value="UniProtKB-SubCell"/>
</dbReference>
<dbReference type="GO" id="GO:0043005">
    <property type="term" value="C:neuron projection"/>
    <property type="evidence" value="ECO:0000250"/>
    <property type="project" value="UniProtKB"/>
</dbReference>
<dbReference type="GO" id="GO:0043025">
    <property type="term" value="C:neuronal cell body"/>
    <property type="evidence" value="ECO:0000250"/>
    <property type="project" value="UniProtKB"/>
</dbReference>
<dbReference type="GO" id="GO:0030133">
    <property type="term" value="C:transport vesicle"/>
    <property type="evidence" value="ECO:0000318"/>
    <property type="project" value="GO_Central"/>
</dbReference>
<dbReference type="GO" id="GO:0007399">
    <property type="term" value="P:nervous system development"/>
    <property type="evidence" value="ECO:0000250"/>
    <property type="project" value="UniProtKB"/>
</dbReference>
<dbReference type="InterPro" id="IPR024883">
    <property type="entry name" value="Neurensin"/>
</dbReference>
<dbReference type="PANTHER" id="PTHR14796">
    <property type="entry name" value="NEURENSIN 1-RELATED"/>
    <property type="match status" value="1"/>
</dbReference>
<dbReference type="PANTHER" id="PTHR14796:SF6">
    <property type="entry name" value="NEURENSIN-1"/>
    <property type="match status" value="1"/>
</dbReference>
<dbReference type="Pfam" id="PF14927">
    <property type="entry name" value="Neurensin"/>
    <property type="match status" value="1"/>
</dbReference>
<sequence length="195" mass="21475">MSSCSNVCGSRQAQAAAEGGYQRYGVRSYLHQFYEDCTASIWEYEDDFQIQRSPNRWSSVFWKVGLISGTVFVILGLTVLAVGFLVPPKIEAFGEADFVVVDTHAVQFNSALDMYKLAGAVLFCIGGTSMAGCLLMSVFVKSYSKEEKFLQQKFKERIADIKAHTQPVTKAPGPGETKIPVTLSRVQNVQPLLAT</sequence>
<name>NRSN1_HUMAN</name>
<gene>
    <name evidence="9" type="primary">NRSN1</name>
    <name type="synonym">VMP</name>
</gene>
<proteinExistence type="evidence at protein level"/>
<accession>Q8IZ57</accession>
<accession>B2RAV4</accession>
<accession>Q8N8R6</accession>
<accession>Q96P21</accession>
<keyword id="KW-0966">Cell projection</keyword>
<keyword id="KW-0472">Membrane</keyword>
<keyword id="KW-1267">Proteomics identification</keyword>
<keyword id="KW-1185">Reference proteome</keyword>
<keyword id="KW-0812">Transmembrane</keyword>
<keyword id="KW-1133">Transmembrane helix</keyword>
<feature type="chain" id="PRO_0000270583" description="Neurensin-1">
    <location>
        <begin position="1"/>
        <end position="195"/>
    </location>
</feature>
<feature type="transmembrane region" description="Helical" evidence="2">
    <location>
        <begin position="66"/>
        <end position="86"/>
    </location>
</feature>
<feature type="transmembrane region" description="Helical" evidence="2">
    <location>
        <begin position="120"/>
        <end position="140"/>
    </location>
</feature>
<feature type="sequence variant" id="VAR_029816" description="In dbSNP:rs17299946.">
    <original>I</original>
    <variation>V</variation>
    <location>
        <position position="41"/>
    </location>
</feature>
<feature type="sequence variant" id="VAR_053737" description="In dbSNP:rs11544636.">
    <original>H</original>
    <variation>Y</variation>
    <location>
        <position position="104"/>
    </location>
</feature>
<feature type="sequence conflict" description="In Ref. 1; AAL14639." evidence="5" ref="1">
    <original>V</original>
    <variation>A</variation>
    <location>
        <position position="138"/>
    </location>
</feature>
<feature type="sequence conflict" description="In Ref. 2; BAC04748." evidence="5" ref="2">
    <original>I</original>
    <variation>T</variation>
    <location>
        <position position="161"/>
    </location>
</feature>
<organism>
    <name type="scientific">Homo sapiens</name>
    <name type="common">Human</name>
    <dbReference type="NCBI Taxonomy" id="9606"/>
    <lineage>
        <taxon>Eukaryota</taxon>
        <taxon>Metazoa</taxon>
        <taxon>Chordata</taxon>
        <taxon>Craniata</taxon>
        <taxon>Vertebrata</taxon>
        <taxon>Euteleostomi</taxon>
        <taxon>Mammalia</taxon>
        <taxon>Eutheria</taxon>
        <taxon>Euarchontoglires</taxon>
        <taxon>Primates</taxon>
        <taxon>Haplorrhini</taxon>
        <taxon>Catarrhini</taxon>
        <taxon>Hominidae</taxon>
        <taxon>Homo</taxon>
    </lineage>
</organism>